<organism>
    <name type="scientific">Francisella tularensis subsp. holarctica (strain LVS)</name>
    <dbReference type="NCBI Taxonomy" id="376619"/>
    <lineage>
        <taxon>Bacteria</taxon>
        <taxon>Pseudomonadati</taxon>
        <taxon>Pseudomonadota</taxon>
        <taxon>Gammaproteobacteria</taxon>
        <taxon>Thiotrichales</taxon>
        <taxon>Francisellaceae</taxon>
        <taxon>Francisella</taxon>
    </lineage>
</organism>
<evidence type="ECO:0000255" key="1">
    <source>
        <dbReference type="HAMAP-Rule" id="MF_00374"/>
    </source>
</evidence>
<evidence type="ECO:0000305" key="2"/>
<protein>
    <recommendedName>
        <fullName evidence="1">Large ribosomal subunit protein uL29</fullName>
    </recommendedName>
    <alternativeName>
        <fullName evidence="2">50S ribosomal protein L29</fullName>
    </alternativeName>
</protein>
<accession>Q2A5G2</accession>
<reference key="1">
    <citation type="submission" date="2006-03" db="EMBL/GenBank/DDBJ databases">
        <title>Complete genome sequence of Francisella tularensis LVS (Live Vaccine Strain).</title>
        <authorList>
            <person name="Chain P."/>
            <person name="Larimer F."/>
            <person name="Land M."/>
            <person name="Stilwagen S."/>
            <person name="Larsson P."/>
            <person name="Bearden S."/>
            <person name="Chu M."/>
            <person name="Oyston P."/>
            <person name="Forsman M."/>
            <person name="Andersson S."/>
            <person name="Lindler L."/>
            <person name="Titball R."/>
            <person name="Garcia E."/>
        </authorList>
    </citation>
    <scope>NUCLEOTIDE SEQUENCE [LARGE SCALE GENOMIC DNA]</scope>
    <source>
        <strain>LVS</strain>
    </source>
</reference>
<dbReference type="EMBL" id="AM233362">
    <property type="protein sequence ID" value="CAJ78685.1"/>
    <property type="molecule type" value="Genomic_DNA"/>
</dbReference>
<dbReference type="RefSeq" id="WP_003014341.1">
    <property type="nucleotide sequence ID" value="NZ_CP009694.1"/>
</dbReference>
<dbReference type="SMR" id="Q2A5G2"/>
<dbReference type="KEGG" id="ftl:FTL_0244"/>
<dbReference type="Proteomes" id="UP000001944">
    <property type="component" value="Chromosome"/>
</dbReference>
<dbReference type="GO" id="GO:0022625">
    <property type="term" value="C:cytosolic large ribosomal subunit"/>
    <property type="evidence" value="ECO:0007669"/>
    <property type="project" value="TreeGrafter"/>
</dbReference>
<dbReference type="GO" id="GO:0003735">
    <property type="term" value="F:structural constituent of ribosome"/>
    <property type="evidence" value="ECO:0007669"/>
    <property type="project" value="InterPro"/>
</dbReference>
<dbReference type="GO" id="GO:0006412">
    <property type="term" value="P:translation"/>
    <property type="evidence" value="ECO:0007669"/>
    <property type="project" value="UniProtKB-UniRule"/>
</dbReference>
<dbReference type="CDD" id="cd00427">
    <property type="entry name" value="Ribosomal_L29_HIP"/>
    <property type="match status" value="1"/>
</dbReference>
<dbReference type="Gene3D" id="6.10.140.1970">
    <property type="match status" value="1"/>
</dbReference>
<dbReference type="HAMAP" id="MF_00374">
    <property type="entry name" value="Ribosomal_uL29"/>
    <property type="match status" value="1"/>
</dbReference>
<dbReference type="InterPro" id="IPR050063">
    <property type="entry name" value="Ribosomal_protein_uL29"/>
</dbReference>
<dbReference type="InterPro" id="IPR001854">
    <property type="entry name" value="Ribosomal_uL29"/>
</dbReference>
<dbReference type="InterPro" id="IPR018254">
    <property type="entry name" value="Ribosomal_uL29_CS"/>
</dbReference>
<dbReference type="InterPro" id="IPR036049">
    <property type="entry name" value="Ribosomal_uL29_sf"/>
</dbReference>
<dbReference type="NCBIfam" id="TIGR00012">
    <property type="entry name" value="L29"/>
    <property type="match status" value="1"/>
</dbReference>
<dbReference type="PANTHER" id="PTHR10916">
    <property type="entry name" value="60S RIBOSOMAL PROTEIN L35/50S RIBOSOMAL PROTEIN L29"/>
    <property type="match status" value="1"/>
</dbReference>
<dbReference type="PANTHER" id="PTHR10916:SF0">
    <property type="entry name" value="LARGE RIBOSOMAL SUBUNIT PROTEIN UL29C"/>
    <property type="match status" value="1"/>
</dbReference>
<dbReference type="Pfam" id="PF00831">
    <property type="entry name" value="Ribosomal_L29"/>
    <property type="match status" value="1"/>
</dbReference>
<dbReference type="SUPFAM" id="SSF46561">
    <property type="entry name" value="Ribosomal protein L29 (L29p)"/>
    <property type="match status" value="1"/>
</dbReference>
<dbReference type="PROSITE" id="PS00579">
    <property type="entry name" value="RIBOSOMAL_L29"/>
    <property type="match status" value="1"/>
</dbReference>
<sequence length="66" mass="7801">MKRKDTLKDYRGKSIDQLQEVKIELLQQLFSLRMQKGTGQLKKNHLFKSAKRDIARINTIISEKNK</sequence>
<comment type="similarity">
    <text evidence="1">Belongs to the universal ribosomal protein uL29 family.</text>
</comment>
<feature type="chain" id="PRO_1000007485" description="Large ribosomal subunit protein uL29">
    <location>
        <begin position="1"/>
        <end position="66"/>
    </location>
</feature>
<keyword id="KW-1185">Reference proteome</keyword>
<keyword id="KW-0687">Ribonucleoprotein</keyword>
<keyword id="KW-0689">Ribosomal protein</keyword>
<gene>
    <name evidence="1" type="primary">rpmC</name>
    <name type="ordered locus">FTL_0244</name>
</gene>
<proteinExistence type="inferred from homology"/>
<name>RL29_FRATH</name>